<gene>
    <name evidence="1" type="primary">rpoZ</name>
    <name type="ordered locus">lwe1845</name>
</gene>
<reference key="1">
    <citation type="journal article" date="2006" name="J. Bacteriol.">
        <title>Whole-genome sequence of Listeria welshimeri reveals common steps in genome reduction with Listeria innocua as compared to Listeria monocytogenes.</title>
        <authorList>
            <person name="Hain T."/>
            <person name="Steinweg C."/>
            <person name="Kuenne C.T."/>
            <person name="Billion A."/>
            <person name="Ghai R."/>
            <person name="Chatterjee S.S."/>
            <person name="Domann E."/>
            <person name="Kaerst U."/>
            <person name="Goesmann A."/>
            <person name="Bekel T."/>
            <person name="Bartels D."/>
            <person name="Kaiser O."/>
            <person name="Meyer F."/>
            <person name="Puehler A."/>
            <person name="Weisshaar B."/>
            <person name="Wehland J."/>
            <person name="Liang C."/>
            <person name="Dandekar T."/>
            <person name="Lampidis R."/>
            <person name="Kreft J."/>
            <person name="Goebel W."/>
            <person name="Chakraborty T."/>
        </authorList>
    </citation>
    <scope>NUCLEOTIDE SEQUENCE [LARGE SCALE GENOMIC DNA]</scope>
    <source>
        <strain>ATCC 35897 / DSM 20650 / CCUG 15529 / CIP 8149 / NCTC 11857 / SLCC 5334 / V8</strain>
    </source>
</reference>
<name>RPOZ_LISW6</name>
<accession>A0AJT1</accession>
<protein>
    <recommendedName>
        <fullName evidence="1">DNA-directed RNA polymerase subunit omega</fullName>
        <shortName evidence="1">RNAP omega subunit</shortName>
        <ecNumber evidence="1">2.7.7.6</ecNumber>
    </recommendedName>
    <alternativeName>
        <fullName evidence="1">RNA polymerase omega subunit</fullName>
    </alternativeName>
    <alternativeName>
        <fullName evidence="1">Transcriptase subunit omega</fullName>
    </alternativeName>
</protein>
<proteinExistence type="inferred from homology"/>
<sequence length="67" mass="7598">MLYPSIDNLLLKIDSKYSLVTVAAKRARYMQLENDKGVLPSYQSDKFVGKALEEIHAGKLVLKNDEK</sequence>
<evidence type="ECO:0000255" key="1">
    <source>
        <dbReference type="HAMAP-Rule" id="MF_00366"/>
    </source>
</evidence>
<keyword id="KW-0240">DNA-directed RNA polymerase</keyword>
<keyword id="KW-0548">Nucleotidyltransferase</keyword>
<keyword id="KW-0804">Transcription</keyword>
<keyword id="KW-0808">Transferase</keyword>
<comment type="function">
    <text evidence="1">Promotes RNA polymerase assembly. Latches the N- and C-terminal regions of the beta' subunit thereby facilitating its interaction with the beta and alpha subunits.</text>
</comment>
<comment type="catalytic activity">
    <reaction evidence="1">
        <text>RNA(n) + a ribonucleoside 5'-triphosphate = RNA(n+1) + diphosphate</text>
        <dbReference type="Rhea" id="RHEA:21248"/>
        <dbReference type="Rhea" id="RHEA-COMP:14527"/>
        <dbReference type="Rhea" id="RHEA-COMP:17342"/>
        <dbReference type="ChEBI" id="CHEBI:33019"/>
        <dbReference type="ChEBI" id="CHEBI:61557"/>
        <dbReference type="ChEBI" id="CHEBI:140395"/>
        <dbReference type="EC" id="2.7.7.6"/>
    </reaction>
</comment>
<comment type="subunit">
    <text evidence="1">The RNAP catalytic core consists of 2 alpha, 1 beta, 1 beta' and 1 omega subunit. When a sigma factor is associated with the core the holoenzyme is formed, which can initiate transcription.</text>
</comment>
<comment type="similarity">
    <text evidence="1">Belongs to the RNA polymerase subunit omega family.</text>
</comment>
<feature type="chain" id="PRO_1000005951" description="DNA-directed RNA polymerase subunit omega">
    <location>
        <begin position="1"/>
        <end position="67"/>
    </location>
</feature>
<organism>
    <name type="scientific">Listeria welshimeri serovar 6b (strain ATCC 35897 / DSM 20650 / CCUG 15529 / CIP 8149 / NCTC 11857 / SLCC 5334 / V8)</name>
    <dbReference type="NCBI Taxonomy" id="386043"/>
    <lineage>
        <taxon>Bacteria</taxon>
        <taxon>Bacillati</taxon>
        <taxon>Bacillota</taxon>
        <taxon>Bacilli</taxon>
        <taxon>Bacillales</taxon>
        <taxon>Listeriaceae</taxon>
        <taxon>Listeria</taxon>
    </lineage>
</organism>
<dbReference type="EC" id="2.7.7.6" evidence="1"/>
<dbReference type="EMBL" id="AM263198">
    <property type="protein sequence ID" value="CAK21263.1"/>
    <property type="molecule type" value="Genomic_DNA"/>
</dbReference>
<dbReference type="RefSeq" id="WP_011702615.1">
    <property type="nucleotide sequence ID" value="NC_008555.1"/>
</dbReference>
<dbReference type="SMR" id="A0AJT1"/>
<dbReference type="STRING" id="386043.lwe1845"/>
<dbReference type="GeneID" id="61189746"/>
<dbReference type="KEGG" id="lwe:lwe1845"/>
<dbReference type="eggNOG" id="COG1758">
    <property type="taxonomic scope" value="Bacteria"/>
</dbReference>
<dbReference type="HOGENOM" id="CLU_125406_6_0_9"/>
<dbReference type="OrthoDB" id="9815459at2"/>
<dbReference type="Proteomes" id="UP000000779">
    <property type="component" value="Chromosome"/>
</dbReference>
<dbReference type="GO" id="GO:0000428">
    <property type="term" value="C:DNA-directed RNA polymerase complex"/>
    <property type="evidence" value="ECO:0007669"/>
    <property type="project" value="UniProtKB-KW"/>
</dbReference>
<dbReference type="GO" id="GO:0003677">
    <property type="term" value="F:DNA binding"/>
    <property type="evidence" value="ECO:0007669"/>
    <property type="project" value="UniProtKB-UniRule"/>
</dbReference>
<dbReference type="GO" id="GO:0003899">
    <property type="term" value="F:DNA-directed RNA polymerase activity"/>
    <property type="evidence" value="ECO:0007669"/>
    <property type="project" value="UniProtKB-UniRule"/>
</dbReference>
<dbReference type="GO" id="GO:0006351">
    <property type="term" value="P:DNA-templated transcription"/>
    <property type="evidence" value="ECO:0007669"/>
    <property type="project" value="UniProtKB-UniRule"/>
</dbReference>
<dbReference type="Gene3D" id="3.90.940.10">
    <property type="match status" value="1"/>
</dbReference>
<dbReference type="HAMAP" id="MF_00366">
    <property type="entry name" value="RNApol_bact_RpoZ"/>
    <property type="match status" value="1"/>
</dbReference>
<dbReference type="InterPro" id="IPR003716">
    <property type="entry name" value="DNA-dir_RNA_pol_omega"/>
</dbReference>
<dbReference type="InterPro" id="IPR006110">
    <property type="entry name" value="Pol_omega/Rpo6/RPB6"/>
</dbReference>
<dbReference type="InterPro" id="IPR036161">
    <property type="entry name" value="RPB6/omega-like_sf"/>
</dbReference>
<dbReference type="NCBIfam" id="TIGR00690">
    <property type="entry name" value="rpoZ"/>
    <property type="match status" value="1"/>
</dbReference>
<dbReference type="PANTHER" id="PTHR34476">
    <property type="entry name" value="DNA-DIRECTED RNA POLYMERASE SUBUNIT OMEGA"/>
    <property type="match status" value="1"/>
</dbReference>
<dbReference type="PANTHER" id="PTHR34476:SF1">
    <property type="entry name" value="DNA-DIRECTED RNA POLYMERASE SUBUNIT OMEGA"/>
    <property type="match status" value="1"/>
</dbReference>
<dbReference type="Pfam" id="PF01192">
    <property type="entry name" value="RNA_pol_Rpb6"/>
    <property type="match status" value="1"/>
</dbReference>
<dbReference type="SMART" id="SM01409">
    <property type="entry name" value="RNA_pol_Rpb6"/>
    <property type="match status" value="1"/>
</dbReference>
<dbReference type="SUPFAM" id="SSF63562">
    <property type="entry name" value="RPB6/omega subunit-like"/>
    <property type="match status" value="1"/>
</dbReference>